<comment type="function">
    <text evidence="1">Exhibits a very high intrinsic GTPase hydrolysis rate. Involved in the addition of a carboxymethylaminomethyl (cmnm) group at the wobble position (U34) of certain tRNAs, forming tRNA-cmnm(5)s(2)U34.</text>
</comment>
<comment type="cofactor">
    <cofactor evidence="1">
        <name>K(+)</name>
        <dbReference type="ChEBI" id="CHEBI:29103"/>
    </cofactor>
    <text evidence="1">Binds 1 potassium ion per subunit.</text>
</comment>
<comment type="subunit">
    <text evidence="1">Homodimer. Heterotetramer of two MnmE and two MnmG subunits.</text>
</comment>
<comment type="subcellular location">
    <subcellularLocation>
        <location evidence="1">Cytoplasm</location>
    </subcellularLocation>
</comment>
<comment type="similarity">
    <text evidence="1">Belongs to the TRAFAC class TrmE-Era-EngA-EngB-Septin-like GTPase superfamily. TrmE GTPase family.</text>
</comment>
<keyword id="KW-0963">Cytoplasm</keyword>
<keyword id="KW-0342">GTP-binding</keyword>
<keyword id="KW-0378">Hydrolase</keyword>
<keyword id="KW-0460">Magnesium</keyword>
<keyword id="KW-0479">Metal-binding</keyword>
<keyword id="KW-0547">Nucleotide-binding</keyword>
<keyword id="KW-0630">Potassium</keyword>
<keyword id="KW-1185">Reference proteome</keyword>
<keyword id="KW-0819">tRNA processing</keyword>
<accession>B0SJ24</accession>
<gene>
    <name evidence="1" type="primary">mnmE</name>
    <name evidence="1" type="synonym">trmE</name>
    <name type="ordered locus">LEPBI_I0290</name>
</gene>
<organism>
    <name type="scientific">Leptospira biflexa serovar Patoc (strain Patoc 1 / ATCC 23582 / Paris)</name>
    <dbReference type="NCBI Taxonomy" id="456481"/>
    <lineage>
        <taxon>Bacteria</taxon>
        <taxon>Pseudomonadati</taxon>
        <taxon>Spirochaetota</taxon>
        <taxon>Spirochaetia</taxon>
        <taxon>Leptospirales</taxon>
        <taxon>Leptospiraceae</taxon>
        <taxon>Leptospira</taxon>
    </lineage>
</organism>
<proteinExistence type="inferred from homology"/>
<evidence type="ECO:0000255" key="1">
    <source>
        <dbReference type="HAMAP-Rule" id="MF_00379"/>
    </source>
</evidence>
<sequence length="461" mass="51675">MIDTIAALSTAQGPGAIGILRVSGSLVMPIALAVLEKNQKPLTETFLQNQKRSAIFCDFVENGKPLDQIVFFYFPAPNSYTGEDLAEFHLHGNPLLLKRALHVLFEKGARPAQKGEFTKRAYMNGKINLSGAEAISRLIEARSKYELELAQKNVFGEITKLSSKIRSDLISLKAECEAEIDFSTEDLTFESLEERKNRMVALKNLCSKLIKDSERAESYILQSTVVLYGEPNTGKSSLMNLLIGKDRSIISDVPGTTRDYIAEELSLDGIPIRLVDTAGIRDTTDNIEQMGIERSKREADSANVKLFLIDTSLPFEKQSFLLKHKDRLFGSLIVANKIDSKHPSWHTESIHDIQEEFQLTISEISCKTKQGIPELLELLKSKLTSKDDTEDLVLLEDRQRYHIQKIESCLSEAIQLMENNAPAEIYIQEINVALHEIGQVNGVVENEEILGRIFSKFCVGK</sequence>
<dbReference type="EC" id="3.6.-.-" evidence="1"/>
<dbReference type="EMBL" id="CP000786">
    <property type="protein sequence ID" value="ABZ96434.1"/>
    <property type="molecule type" value="Genomic_DNA"/>
</dbReference>
<dbReference type="RefSeq" id="WP_012387322.1">
    <property type="nucleotide sequence ID" value="NC_010602.1"/>
</dbReference>
<dbReference type="SMR" id="B0SJ24"/>
<dbReference type="STRING" id="456481.LEPBI_I0290"/>
<dbReference type="KEGG" id="lbi:LEPBI_I0290"/>
<dbReference type="HOGENOM" id="CLU_019624_4_1_12"/>
<dbReference type="OrthoDB" id="9805918at2"/>
<dbReference type="BioCyc" id="LBIF456481:LEPBI_RS01415-MONOMER"/>
<dbReference type="Proteomes" id="UP000001847">
    <property type="component" value="Chromosome I"/>
</dbReference>
<dbReference type="GO" id="GO:0005829">
    <property type="term" value="C:cytosol"/>
    <property type="evidence" value="ECO:0007669"/>
    <property type="project" value="TreeGrafter"/>
</dbReference>
<dbReference type="GO" id="GO:0005525">
    <property type="term" value="F:GTP binding"/>
    <property type="evidence" value="ECO:0007669"/>
    <property type="project" value="UniProtKB-UniRule"/>
</dbReference>
<dbReference type="GO" id="GO:0003924">
    <property type="term" value="F:GTPase activity"/>
    <property type="evidence" value="ECO:0007669"/>
    <property type="project" value="UniProtKB-UniRule"/>
</dbReference>
<dbReference type="GO" id="GO:0046872">
    <property type="term" value="F:metal ion binding"/>
    <property type="evidence" value="ECO:0007669"/>
    <property type="project" value="UniProtKB-KW"/>
</dbReference>
<dbReference type="GO" id="GO:0030488">
    <property type="term" value="P:tRNA methylation"/>
    <property type="evidence" value="ECO:0007669"/>
    <property type="project" value="TreeGrafter"/>
</dbReference>
<dbReference type="GO" id="GO:0002098">
    <property type="term" value="P:tRNA wobble uridine modification"/>
    <property type="evidence" value="ECO:0007669"/>
    <property type="project" value="TreeGrafter"/>
</dbReference>
<dbReference type="CDD" id="cd04164">
    <property type="entry name" value="trmE"/>
    <property type="match status" value="1"/>
</dbReference>
<dbReference type="CDD" id="cd14858">
    <property type="entry name" value="TrmE_N"/>
    <property type="match status" value="1"/>
</dbReference>
<dbReference type="FunFam" id="3.40.50.300:FF:001376">
    <property type="entry name" value="tRNA modification GTPase MnmE"/>
    <property type="match status" value="1"/>
</dbReference>
<dbReference type="Gene3D" id="3.40.50.300">
    <property type="entry name" value="P-loop containing nucleotide triphosphate hydrolases"/>
    <property type="match status" value="1"/>
</dbReference>
<dbReference type="Gene3D" id="3.30.1360.120">
    <property type="entry name" value="Probable tRNA modification gtpase trme, domain 1"/>
    <property type="match status" value="1"/>
</dbReference>
<dbReference type="Gene3D" id="1.20.120.430">
    <property type="entry name" value="tRNA modification GTPase MnmE domain 2"/>
    <property type="match status" value="1"/>
</dbReference>
<dbReference type="HAMAP" id="MF_00379">
    <property type="entry name" value="GTPase_MnmE"/>
    <property type="match status" value="1"/>
</dbReference>
<dbReference type="InterPro" id="IPR031168">
    <property type="entry name" value="G_TrmE"/>
</dbReference>
<dbReference type="InterPro" id="IPR006073">
    <property type="entry name" value="GTP-bd"/>
</dbReference>
<dbReference type="InterPro" id="IPR018948">
    <property type="entry name" value="GTP-bd_TrmE_N"/>
</dbReference>
<dbReference type="InterPro" id="IPR004520">
    <property type="entry name" value="GTPase_MnmE"/>
</dbReference>
<dbReference type="InterPro" id="IPR027368">
    <property type="entry name" value="MnmE_dom2"/>
</dbReference>
<dbReference type="InterPro" id="IPR025867">
    <property type="entry name" value="MnmE_helical"/>
</dbReference>
<dbReference type="InterPro" id="IPR027417">
    <property type="entry name" value="P-loop_NTPase"/>
</dbReference>
<dbReference type="InterPro" id="IPR005225">
    <property type="entry name" value="Small_GTP-bd"/>
</dbReference>
<dbReference type="InterPro" id="IPR027266">
    <property type="entry name" value="TrmE/GcvT_dom1"/>
</dbReference>
<dbReference type="NCBIfam" id="TIGR00450">
    <property type="entry name" value="mnmE_trmE_thdF"/>
    <property type="match status" value="1"/>
</dbReference>
<dbReference type="NCBIfam" id="TIGR00231">
    <property type="entry name" value="small_GTP"/>
    <property type="match status" value="1"/>
</dbReference>
<dbReference type="PANTHER" id="PTHR42714">
    <property type="entry name" value="TRNA MODIFICATION GTPASE GTPBP3"/>
    <property type="match status" value="1"/>
</dbReference>
<dbReference type="PANTHER" id="PTHR42714:SF2">
    <property type="entry name" value="TRNA MODIFICATION GTPASE GTPBP3, MITOCHONDRIAL"/>
    <property type="match status" value="1"/>
</dbReference>
<dbReference type="Pfam" id="PF01926">
    <property type="entry name" value="MMR_HSR1"/>
    <property type="match status" value="1"/>
</dbReference>
<dbReference type="Pfam" id="PF12631">
    <property type="entry name" value="MnmE_helical"/>
    <property type="match status" value="1"/>
</dbReference>
<dbReference type="Pfam" id="PF10396">
    <property type="entry name" value="TrmE_N"/>
    <property type="match status" value="1"/>
</dbReference>
<dbReference type="SUPFAM" id="SSF52540">
    <property type="entry name" value="P-loop containing nucleoside triphosphate hydrolases"/>
    <property type="match status" value="1"/>
</dbReference>
<dbReference type="PROSITE" id="PS51709">
    <property type="entry name" value="G_TRME"/>
    <property type="match status" value="1"/>
</dbReference>
<reference key="1">
    <citation type="journal article" date="2008" name="PLoS ONE">
        <title>Genome sequence of the saprophyte Leptospira biflexa provides insights into the evolution of Leptospira and the pathogenesis of leptospirosis.</title>
        <authorList>
            <person name="Picardeau M."/>
            <person name="Bulach D.M."/>
            <person name="Bouchier C."/>
            <person name="Zuerner R.L."/>
            <person name="Zidane N."/>
            <person name="Wilson P.J."/>
            <person name="Creno S."/>
            <person name="Kuczek E.S."/>
            <person name="Bommezzadri S."/>
            <person name="Davis J.C."/>
            <person name="McGrath A."/>
            <person name="Johnson M.J."/>
            <person name="Boursaux-Eude C."/>
            <person name="Seemann T."/>
            <person name="Rouy Z."/>
            <person name="Coppel R.L."/>
            <person name="Rood J.I."/>
            <person name="Lajus A."/>
            <person name="Davies J.K."/>
            <person name="Medigue C."/>
            <person name="Adler B."/>
        </authorList>
    </citation>
    <scope>NUCLEOTIDE SEQUENCE [LARGE SCALE GENOMIC DNA]</scope>
    <source>
        <strain>Patoc 1 / ATCC 23582 / Paris</strain>
    </source>
</reference>
<name>MNME_LEPBP</name>
<protein>
    <recommendedName>
        <fullName evidence="1">tRNA modification GTPase MnmE</fullName>
        <ecNumber evidence="1">3.6.-.-</ecNumber>
    </recommendedName>
</protein>
<feature type="chain" id="PRO_0000345821" description="tRNA modification GTPase MnmE">
    <location>
        <begin position="1"/>
        <end position="461"/>
    </location>
</feature>
<feature type="domain" description="TrmE-type G">
    <location>
        <begin position="222"/>
        <end position="384"/>
    </location>
</feature>
<feature type="binding site" evidence="1">
    <location>
        <position position="21"/>
    </location>
    <ligand>
        <name>(6S)-5-formyl-5,6,7,8-tetrahydrofolate</name>
        <dbReference type="ChEBI" id="CHEBI:57457"/>
    </ligand>
</feature>
<feature type="binding site" evidence="1">
    <location>
        <position position="87"/>
    </location>
    <ligand>
        <name>(6S)-5-formyl-5,6,7,8-tetrahydrofolate</name>
        <dbReference type="ChEBI" id="CHEBI:57457"/>
    </ligand>
</feature>
<feature type="binding site" evidence="1">
    <location>
        <position position="126"/>
    </location>
    <ligand>
        <name>(6S)-5-formyl-5,6,7,8-tetrahydrofolate</name>
        <dbReference type="ChEBI" id="CHEBI:57457"/>
    </ligand>
</feature>
<feature type="binding site" evidence="1">
    <location>
        <begin position="232"/>
        <end position="237"/>
    </location>
    <ligand>
        <name>GTP</name>
        <dbReference type="ChEBI" id="CHEBI:37565"/>
    </ligand>
</feature>
<feature type="binding site" evidence="1">
    <location>
        <position position="232"/>
    </location>
    <ligand>
        <name>K(+)</name>
        <dbReference type="ChEBI" id="CHEBI:29103"/>
    </ligand>
</feature>
<feature type="binding site" evidence="1">
    <location>
        <position position="236"/>
    </location>
    <ligand>
        <name>Mg(2+)</name>
        <dbReference type="ChEBI" id="CHEBI:18420"/>
    </ligand>
</feature>
<feature type="binding site" evidence="1">
    <location>
        <begin position="251"/>
        <end position="257"/>
    </location>
    <ligand>
        <name>GTP</name>
        <dbReference type="ChEBI" id="CHEBI:37565"/>
    </ligand>
</feature>
<feature type="binding site" evidence="1">
    <location>
        <position position="251"/>
    </location>
    <ligand>
        <name>K(+)</name>
        <dbReference type="ChEBI" id="CHEBI:29103"/>
    </ligand>
</feature>
<feature type="binding site" evidence="1">
    <location>
        <position position="253"/>
    </location>
    <ligand>
        <name>K(+)</name>
        <dbReference type="ChEBI" id="CHEBI:29103"/>
    </ligand>
</feature>
<feature type="binding site" evidence="1">
    <location>
        <position position="256"/>
    </location>
    <ligand>
        <name>K(+)</name>
        <dbReference type="ChEBI" id="CHEBI:29103"/>
    </ligand>
</feature>
<feature type="binding site" evidence="1">
    <location>
        <position position="257"/>
    </location>
    <ligand>
        <name>Mg(2+)</name>
        <dbReference type="ChEBI" id="CHEBI:18420"/>
    </ligand>
</feature>
<feature type="binding site" evidence="1">
    <location>
        <begin position="276"/>
        <end position="279"/>
    </location>
    <ligand>
        <name>GTP</name>
        <dbReference type="ChEBI" id="CHEBI:37565"/>
    </ligand>
</feature>
<feature type="binding site" evidence="1">
    <location>
        <position position="461"/>
    </location>
    <ligand>
        <name>(6S)-5-formyl-5,6,7,8-tetrahydrofolate</name>
        <dbReference type="ChEBI" id="CHEBI:57457"/>
    </ligand>
</feature>